<accession>Q197E1</accession>
<gene>
    <name type="ORF">IIV3-019R</name>
</gene>
<comment type="similarity">
    <text evidence="3">Belongs to the IIV-6 201R/289L family.</text>
</comment>
<organism>
    <name type="scientific">Invertebrate iridescent virus 3</name>
    <name type="common">IIV-3</name>
    <name type="synonym">Mosquito iridescent virus</name>
    <dbReference type="NCBI Taxonomy" id="345201"/>
    <lineage>
        <taxon>Viruses</taxon>
        <taxon>Varidnaviria</taxon>
        <taxon>Bamfordvirae</taxon>
        <taxon>Nucleocytoviricota</taxon>
        <taxon>Megaviricetes</taxon>
        <taxon>Pimascovirales</taxon>
        <taxon>Iridoviridae</taxon>
        <taxon>Betairidovirinae</taxon>
        <taxon>Chloriridovirus</taxon>
    </lineage>
</organism>
<keyword id="KW-0175">Coiled coil</keyword>
<keyword id="KW-1185">Reference proteome</keyword>
<reference key="1">
    <citation type="journal article" date="2006" name="J. Virol.">
        <title>Genome of invertebrate iridescent virus type 3 (mosquito iridescent virus).</title>
        <authorList>
            <person name="Delhon G."/>
            <person name="Tulman E.R."/>
            <person name="Afonso C.L."/>
            <person name="Lu Z."/>
            <person name="Becnel J.J."/>
            <person name="Moser B.A."/>
            <person name="Kutish G.F."/>
            <person name="Rock D.L."/>
        </authorList>
    </citation>
    <scope>NUCLEOTIDE SEQUENCE [LARGE SCALE GENOMIC DNA]</scope>
</reference>
<protein>
    <recommendedName>
        <fullName>Putative Bro-N domain-containing protein 019R</fullName>
    </recommendedName>
</protein>
<sequence length="406" mass="46855">MNALINLKQSREYTTVTIDGQNHHIKLAGTMDDPYFCGKDVCSILRYKDVKQALQNKVKPKNKKMLSVLVKQDHNAVGVQTTSTRLGSNSPLTYNEGKAIYINEPGLYALIMHSNAPFAEEFQDLVYEQILPSIRKYGSYQLEMQLTQAMEQLSIKERDVQEAHEARIKAERKAVRVDKFMRRIAIKERKLEWIYIATTQQYAQERLFKIGSTSRLNTRIGHYNVGRPAEDSYYYCWVTKCYNSKDIDYHIQKLLVDFKHKNNAELYCSIKFSDLVAIVSFIVQHYDASIDYINSFIKTRLVASFDEEDGIPPAIDIRTSLANQGLVVDQDDIDVLIPQELNDSINEKVKQNLEEIVIERKELISKLADKTNISKKDLWTRIKDLTGWSSSKTVIINGDLNYKIIY</sequence>
<organismHost>
    <name type="scientific">Aedes vexans</name>
    <name type="common">Inland floodwater mosquito</name>
    <name type="synonym">Culex vexans</name>
    <dbReference type="NCBI Taxonomy" id="7163"/>
</organismHost>
<organismHost>
    <name type="scientific">Culex territans</name>
    <dbReference type="NCBI Taxonomy" id="42431"/>
</organismHost>
<organismHost>
    <name type="scientific">Culiseta annulata</name>
    <dbReference type="NCBI Taxonomy" id="332058"/>
</organismHost>
<organismHost>
    <name type="scientific">Ochlerotatus sollicitans</name>
    <name type="common">eastern saltmarsh mosquito</name>
    <dbReference type="NCBI Taxonomy" id="310513"/>
</organismHost>
<organismHost>
    <name type="scientific">Ochlerotatus taeniorhynchus</name>
    <name type="common">Black salt marsh mosquito</name>
    <name type="synonym">Aedes taeniorhynchus</name>
    <dbReference type="NCBI Taxonomy" id="329105"/>
</organismHost>
<organismHost>
    <name type="scientific">Psorophora ferox</name>
    <dbReference type="NCBI Taxonomy" id="7183"/>
</organismHost>
<proteinExistence type="inferred from homology"/>
<name>VF201_IIV3</name>
<evidence type="ECO:0000255" key="1"/>
<evidence type="ECO:0000255" key="2">
    <source>
        <dbReference type="PROSITE-ProRule" id="PRU01086"/>
    </source>
</evidence>
<evidence type="ECO:0000305" key="3"/>
<dbReference type="EMBL" id="DQ643392">
    <property type="protein sequence ID" value="ABF82049.1"/>
    <property type="molecule type" value="Genomic_DNA"/>
</dbReference>
<dbReference type="RefSeq" id="YP_654591.1">
    <property type="nucleotide sequence ID" value="NC_008187.1"/>
</dbReference>
<dbReference type="SMR" id="Q197E1"/>
<dbReference type="KEGG" id="vg:4156268"/>
<dbReference type="OrthoDB" id="5801at10239"/>
<dbReference type="Proteomes" id="UP000001358">
    <property type="component" value="Genome"/>
</dbReference>
<dbReference type="InterPro" id="IPR003497">
    <property type="entry name" value="BRO_N_domain"/>
</dbReference>
<dbReference type="InterPro" id="IPR018306">
    <property type="entry name" value="Phage_T5_Orf172_DNA-bd"/>
</dbReference>
<dbReference type="PANTHER" id="PTHR36180:SF2">
    <property type="entry name" value="BRO FAMILY PROTEIN"/>
    <property type="match status" value="1"/>
</dbReference>
<dbReference type="PANTHER" id="PTHR36180">
    <property type="entry name" value="DNA-BINDING PROTEIN-RELATED-RELATED"/>
    <property type="match status" value="1"/>
</dbReference>
<dbReference type="Pfam" id="PF02498">
    <property type="entry name" value="Bro-N"/>
    <property type="match status" value="1"/>
</dbReference>
<dbReference type="Pfam" id="PF10544">
    <property type="entry name" value="T5orf172"/>
    <property type="match status" value="1"/>
</dbReference>
<dbReference type="SMART" id="SM01040">
    <property type="entry name" value="Bro-N"/>
    <property type="match status" value="1"/>
</dbReference>
<dbReference type="PROSITE" id="PS51750">
    <property type="entry name" value="BRO_N"/>
    <property type="match status" value="1"/>
</dbReference>
<feature type="chain" id="PRO_0000377933" description="Putative Bro-N domain-containing protein 019R">
    <location>
        <begin position="1"/>
        <end position="406"/>
    </location>
</feature>
<feature type="domain" description="Bro-N" evidence="2">
    <location>
        <begin position="4"/>
        <end position="138"/>
    </location>
</feature>
<feature type="coiled-coil region" evidence="1">
    <location>
        <begin position="141"/>
        <end position="177"/>
    </location>
</feature>
<feature type="coiled-coil region" evidence="1">
    <location>
        <begin position="343"/>
        <end position="372"/>
    </location>
</feature>